<reference key="1">
    <citation type="submission" date="2003-02" db="EMBL/GenBank/DDBJ databases">
        <title>Co-evolution in cytochrome c oxidase: 9 of 13 subunits show accelerated rates of nonsynonymous substitution in anthropoid primates.</title>
        <authorList>
            <person name="Doan J.W."/>
            <person name="Schmidt T.R."/>
            <person name="Wildman D.E."/>
            <person name="Goldberg A."/>
            <person name="Huttemann M."/>
            <person name="Goodman M."/>
            <person name="Weiss M.L."/>
            <person name="Grossman L.I."/>
        </authorList>
    </citation>
    <scope>NUCLEOTIDE SEQUENCE [MRNA]</scope>
</reference>
<proteinExistence type="inferred from homology"/>
<name>CX6B1_CARSF</name>
<accession>Q7YRK6</accession>
<sequence>MAEDIKTKIKNYKTAPFDSRFPNQNQTRNCWQNYLDFHRCEKAMTAKGGDVSVCEWYRRVYKSLCPISWVSTWDDRRAEGTFPGKI</sequence>
<dbReference type="EMBL" id="AY236504">
    <property type="protein sequence ID" value="AAP43950.1"/>
    <property type="molecule type" value="mRNA"/>
</dbReference>
<dbReference type="RefSeq" id="XP_008069188.1">
    <property type="nucleotide sequence ID" value="XM_008070997.1"/>
</dbReference>
<dbReference type="SMR" id="Q7YRK6"/>
<dbReference type="STRING" id="1868482.ENSTSYP00000013356"/>
<dbReference type="Ensembl" id="ENSTSYT00000014556">
    <property type="protein sequence ID" value="ENSTSYP00000013356"/>
    <property type="gene ID" value="ENSTSYG00000014563"/>
</dbReference>
<dbReference type="GeneID" id="103273566"/>
<dbReference type="KEGG" id="csyr:103273566"/>
<dbReference type="CTD" id="32989"/>
<dbReference type="HOGENOM" id="CLU_133964_3_1_1"/>
<dbReference type="OMA" id="NEWIAKW"/>
<dbReference type="OrthoDB" id="1107506at2759"/>
<dbReference type="TreeFam" id="TF105065"/>
<dbReference type="UniPathway" id="UPA00705"/>
<dbReference type="Proteomes" id="UP000189704">
    <property type="component" value="Unplaced"/>
</dbReference>
<dbReference type="GO" id="GO:0005743">
    <property type="term" value="C:mitochondrial inner membrane"/>
    <property type="evidence" value="ECO:0007669"/>
    <property type="project" value="UniProtKB-SubCell"/>
</dbReference>
<dbReference type="GO" id="GO:0045277">
    <property type="term" value="C:respiratory chain complex IV"/>
    <property type="evidence" value="ECO:0007669"/>
    <property type="project" value="InterPro"/>
</dbReference>
<dbReference type="GO" id="GO:0006119">
    <property type="term" value="P:oxidative phosphorylation"/>
    <property type="evidence" value="ECO:0007669"/>
    <property type="project" value="UniProtKB-UniPathway"/>
</dbReference>
<dbReference type="CDD" id="cd00926">
    <property type="entry name" value="Cyt_c_Oxidase_VIb"/>
    <property type="match status" value="1"/>
</dbReference>
<dbReference type="FunFam" id="1.10.10.140:FF:000001">
    <property type="entry name" value="Cytochrome c oxidase subunit 6B1"/>
    <property type="match status" value="1"/>
</dbReference>
<dbReference type="Gene3D" id="1.10.10.140">
    <property type="entry name" value="Cytochrome c oxidase, subunit VIb"/>
    <property type="match status" value="1"/>
</dbReference>
<dbReference type="InterPro" id="IPR048280">
    <property type="entry name" value="COX6B-like"/>
</dbReference>
<dbReference type="InterPro" id="IPR036549">
    <property type="entry name" value="CX6/COA6-like_sf"/>
</dbReference>
<dbReference type="InterPro" id="IPR003213">
    <property type="entry name" value="Cyt_c_oxidase_su6B"/>
</dbReference>
<dbReference type="PANTHER" id="PTHR11387">
    <property type="entry name" value="CYTOCHROME C OXIDASE SUBUNIT 6B"/>
    <property type="match status" value="1"/>
</dbReference>
<dbReference type="Pfam" id="PF02297">
    <property type="entry name" value="COX6B"/>
    <property type="match status" value="1"/>
</dbReference>
<dbReference type="PIRSF" id="PIRSF000278">
    <property type="entry name" value="Cyt_c_oxidase_6B"/>
    <property type="match status" value="1"/>
</dbReference>
<dbReference type="SUPFAM" id="SSF47694">
    <property type="entry name" value="Cytochrome c oxidase subunit h"/>
    <property type="match status" value="1"/>
</dbReference>
<dbReference type="PROSITE" id="PS51808">
    <property type="entry name" value="CHCH"/>
    <property type="match status" value="1"/>
</dbReference>
<evidence type="ECO:0000250" key="1">
    <source>
        <dbReference type="UniProtKB" id="P00429"/>
    </source>
</evidence>
<evidence type="ECO:0000250" key="2">
    <source>
        <dbReference type="UniProtKB" id="P56391"/>
    </source>
</evidence>
<evidence type="ECO:0000250" key="3">
    <source>
        <dbReference type="UniProtKB" id="Q01519"/>
    </source>
</evidence>
<evidence type="ECO:0000255" key="4">
    <source>
        <dbReference type="PROSITE-ProRule" id="PRU01150"/>
    </source>
</evidence>
<evidence type="ECO:0000305" key="5"/>
<feature type="initiator methionine" description="Removed" evidence="1">
    <location>
        <position position="1"/>
    </location>
</feature>
<feature type="chain" id="PRO_0000194918" description="Cytochrome c oxidase subunit 6B1">
    <location>
        <begin position="2"/>
        <end position="86"/>
    </location>
</feature>
<feature type="domain" description="CHCH" evidence="4">
    <location>
        <begin position="27"/>
        <end position="73"/>
    </location>
</feature>
<feature type="short sequence motif" description="Cx9C motif" evidence="4">
    <location>
        <begin position="30"/>
        <end position="40"/>
    </location>
</feature>
<feature type="short sequence motif" description="Cx10C motif" evidence="4">
    <location>
        <begin position="54"/>
        <end position="65"/>
    </location>
</feature>
<feature type="modified residue" description="N-acetylalanine" evidence="1">
    <location>
        <position position="2"/>
    </location>
</feature>
<feature type="modified residue" description="N6-acetyllysine" evidence="2">
    <location>
        <position position="62"/>
    </location>
</feature>
<feature type="disulfide bond" evidence="4">
    <location>
        <begin position="30"/>
        <end position="65"/>
    </location>
</feature>
<feature type="disulfide bond" evidence="4">
    <location>
        <begin position="40"/>
        <end position="54"/>
    </location>
</feature>
<keyword id="KW-0007">Acetylation</keyword>
<keyword id="KW-1015">Disulfide bond</keyword>
<keyword id="KW-0472">Membrane</keyword>
<keyword id="KW-0496">Mitochondrion</keyword>
<keyword id="KW-0999">Mitochondrion inner membrane</keyword>
<keyword id="KW-1185">Reference proteome</keyword>
<protein>
    <recommendedName>
        <fullName>Cytochrome c oxidase subunit 6B1</fullName>
    </recommendedName>
    <alternativeName>
        <fullName>Cytochrome c oxidase subunit VIb isoform 1</fullName>
        <shortName>COX VIb-1</shortName>
    </alternativeName>
</protein>
<organism>
    <name type="scientific">Carlito syrichta</name>
    <name type="common">Philippine tarsier</name>
    <name type="synonym">Tarsius syrichta</name>
    <dbReference type="NCBI Taxonomy" id="1868482"/>
    <lineage>
        <taxon>Eukaryota</taxon>
        <taxon>Metazoa</taxon>
        <taxon>Chordata</taxon>
        <taxon>Craniata</taxon>
        <taxon>Vertebrata</taxon>
        <taxon>Euteleostomi</taxon>
        <taxon>Mammalia</taxon>
        <taxon>Eutheria</taxon>
        <taxon>Euarchontoglires</taxon>
        <taxon>Primates</taxon>
        <taxon>Haplorrhini</taxon>
        <taxon>Tarsiiformes</taxon>
        <taxon>Tarsiidae</taxon>
        <taxon>Carlito</taxon>
    </lineage>
</organism>
<comment type="function">
    <text evidence="3">Component of the cytochrome c oxidase, the last enzyme in the mitochondrial electron transport chain which drives oxidative phosphorylation. The respiratory chain contains 3 multisubunit complexes succinate dehydrogenase (complex II, CII), ubiquinol-cytochrome c oxidoreductase (cytochrome b-c1 complex, complex III, CIII) and cytochrome c oxidase (complex IV, CIV), that cooperate to transfer electrons derived from NADH and succinate to molecular oxygen, creating an electrochemical gradient over the inner membrane that drives transmembrane transport and the ATP synthase. Cytochrome c oxidase is the component of the respiratory chain that catalyzes the reduction of oxygen to water. Electrons originating from reduced cytochrome c in the intermembrane space (IMS) are transferred via the dinuclear copper A center (CU(A)) of subunit 2 and heme A of subunit 1 to the active site in subunit 1, a binuclear center (BNC) formed by heme A3 and copper B (CU(B)). The BNC reduces molecular oxygen to 2 water molecules using 4 electrons from cytochrome c in the IMS and 4 protons from the mitochondrial matrix.</text>
</comment>
<comment type="pathway">
    <text evidence="3">Energy metabolism; oxidative phosphorylation.</text>
</comment>
<comment type="subunit">
    <text evidence="1">Component of the cytochrome c oxidase (complex IV, CIV), a multisubunit enzyme composed of 14 subunits. The complex is composed of a catalytic core of 3 subunits MT-CO1, MT-CO2 and MT-CO3, encoded in the mitochondrial DNA, and 11 supernumerary subunits COX4I, COX5A, COX5B, COX6A, COX6B, COX6C, COX7A, COX7B, COX7C, COX8 and NDUFA4, which are encoded in the nuclear genome. The complex exists as a monomer or a dimer and forms supercomplexes (SCs) in the inner mitochondrial membrane with NADH-ubiquinone oxidoreductase (complex I, CI) and ubiquinol-cytochrome c oxidoreductase (cytochrome b-c1 complex, complex III, CIII), resulting in different assemblies (supercomplex SCI(1)III(2)IV(1) and megacomplex MCI(2)III(2)IV(2)).</text>
</comment>
<comment type="subcellular location">
    <subcellularLocation>
        <location evidence="1">Mitochondrion inner membrane</location>
        <topology evidence="1">Peripheral membrane protein</topology>
        <orientation evidence="1">Intermembrane side</orientation>
    </subcellularLocation>
</comment>
<comment type="similarity">
    <text evidence="5">Belongs to the cytochrome c oxidase subunit 6B family.</text>
</comment>
<gene>
    <name type="primary">COX6B1</name>
    <name type="synonym">COX6B</name>
</gene>